<proteinExistence type="evidence at protein level"/>
<comment type="function">
    <text evidence="1 4 5 7 8 10 11 12 13 18">Essential bifunctional enzyme that catalyzes both the N-deacetylation and the N-sulfation of glucosamine (GlcNAc) of the glycosaminoglycan in heparan sulfate (PubMed:10664446, PubMed:10758005, PubMed:11087757, PubMed:12590599, PubMed:12692154, PubMed:16020517, PubMed:16056228, PubMed:18337501). Modifies the GlcNAc-GlcA disaccharide repeating sugar backbone to make N-sulfated heparosan, a prerequisite substrate for later modifications in heparin biosynthesis (Probable). Plays a role in determining the extent and pattern of sulfation of heparan sulfate (Probable). Participates in biosynthesis of heparan sulfate that can ultimately serve as L-selectin ligands, thereby playing a role in inflammatory response (PubMed:16056228). Required for the exosomal release of SDCBP, CD63 and syndecan (By similarity).</text>
</comment>
<comment type="catalytic activity">
    <reaction evidence="1">
        <text>N-acetyl-alpha-D-glucosaminyl-[heparan sulfate](n) + H2O = alpha-D-glucosaminyl-[heparan sulfate](n) + acetate</text>
        <dbReference type="Rhea" id="RHEA:70587"/>
        <dbReference type="Rhea" id="RHEA-COMP:9830"/>
        <dbReference type="Rhea" id="RHEA-COMP:11585"/>
        <dbReference type="ChEBI" id="CHEBI:15377"/>
        <dbReference type="ChEBI" id="CHEBI:30089"/>
        <dbReference type="ChEBI" id="CHEBI:58388"/>
        <dbReference type="ChEBI" id="CHEBI:70974"/>
    </reaction>
    <physiologicalReaction direction="left-to-right" evidence="1">
        <dbReference type="Rhea" id="RHEA:70588"/>
    </physiologicalReaction>
</comment>
<comment type="catalytic activity">
    <reaction evidence="5 7 8 9 11 12 13">
        <text>alpha-D-glucosaminyl-[heparan sulfate](n) + 3'-phosphoadenylyl sulfate = N-sulfo-alpha-D-glucosaminyl-[heparan sulfate](n) + adenosine 3',5'-bisphosphate + 2 H(+)</text>
        <dbReference type="Rhea" id="RHEA:21980"/>
        <dbReference type="Rhea" id="RHEA-COMP:9830"/>
        <dbReference type="Rhea" id="RHEA-COMP:14602"/>
        <dbReference type="ChEBI" id="CHEBI:15378"/>
        <dbReference type="ChEBI" id="CHEBI:58339"/>
        <dbReference type="ChEBI" id="CHEBI:58343"/>
        <dbReference type="ChEBI" id="CHEBI:58388"/>
        <dbReference type="ChEBI" id="CHEBI:140572"/>
        <dbReference type="EC" id="2.8.2.8"/>
    </reaction>
    <physiologicalReaction direction="left-to-right" evidence="11 12">
        <dbReference type="Rhea" id="RHEA:21981"/>
    </physiologicalReaction>
</comment>
<comment type="activity regulation">
    <text evidence="9">Inhibited by long N-sulfated sequences (more than 6 sugar residues) accumulating in its substrates heparan sulfate, and heparin.</text>
</comment>
<comment type="biophysicochemical properties">
    <kinetics>
        <KM evidence="9">13.3 uM for K5 polysaccharide</KM>
        <KM evidence="9">0.35 uM for N-acetylated HS-II</KM>
    </kinetics>
</comment>
<comment type="pathway">
    <text evidence="5 8 9 11 12">Glycan metabolism; heparan sulfate biosynthesis.</text>
</comment>
<comment type="pathway">
    <text evidence="18">Glycan metabolism; heparin biosynthesis.</text>
</comment>
<comment type="subunit">
    <text evidence="1 13">Monomer (By similarity). Interacts with heparan sulfate co-polymerase subunits EXT1 and EXT2.</text>
</comment>
<comment type="interaction">
    <interactant intactId="EBI-15693148">
        <id>Q3UHN9</id>
    </interactant>
    <interactant intactId="EBI-15693102">
        <id>P70428</id>
        <label>Ext2</label>
    </interactant>
    <organismsDiffer>false</organismsDiffer>
    <experiments>2</experiments>
</comment>
<comment type="subcellular location">
    <subcellularLocation>
        <location evidence="2">Golgi apparatus membrane</location>
        <topology evidence="3">Single-pass type II membrane protein</topology>
    </subcellularLocation>
    <subcellularLocation>
        <location evidence="1">Golgi apparatus</location>
        <location evidence="1">trans-Golgi network membrane</location>
        <topology evidence="3">Single-pass type II membrane protein</topology>
    </subcellularLocation>
    <subcellularLocation>
        <location evidence="1">Golgi apparatus</location>
        <location evidence="1">cis-Golgi network membrane</location>
        <topology evidence="3">Single-pass type II membrane protein</topology>
    </subcellularLocation>
</comment>
<comment type="alternative products">
    <event type="alternative splicing"/>
    <isoform>
        <id>Q3UHN9-1</id>
        <name>1</name>
        <sequence type="displayed"/>
    </isoform>
    <isoform>
        <id>Q3UHN9-2</id>
        <name>2</name>
        <sequence type="described" ref="VSP_017401 VSP_017402"/>
    </isoform>
    <isoform>
        <id>Q3UHN9-3</id>
        <name>3</name>
        <sequence type="described" ref="VSP_017399 VSP_017400"/>
    </isoform>
</comment>
<comment type="tissue specificity">
    <text evidence="7">Widely expressed in adult and throughout development.</text>
</comment>
<comment type="disruption phenotype">
    <text evidence="4 6 10 11 12">Mice survive until birth but are cyanotic and die neonatally in a condition resembling respiratory distress syndrome. In addition, a minor proportion of mice embryos die during the embryonic period. Mutant mice display cerebral hypoplasia and craniofacial defects, disturbed Ca(2+) kinetics in myotubes. They also display deficiencies L-selectin and chemokine-mediated neutrophil trafficking during inflammatory responses.</text>
</comment>
<comment type="miscellaneous">
    <text>The presence of 4 different NDST enzymes in mammals, as well as differences in their enzyme activity suggest that some initiate heparan sulfate modification/sulfation reactions, whereas other later on fill in or extend already modified heparan sulfate sequences.</text>
</comment>
<comment type="similarity">
    <text evidence="16">Belongs to the sulfotransferase 1 family. NDST subfamily.</text>
</comment>
<comment type="sequence caution" evidence="16">
    <conflict type="frameshift">
        <sequence resource="EMBL-CDS" id="BAE41527"/>
    </conflict>
</comment>
<accession>Q3UHN9</accession>
<accession>O70353</accession>
<accession>Q3TBX3</accession>
<accession>Q3TDS3</accession>
<accession>Q8BZE5</accession>
<accession>Q9R206</accession>
<organism>
    <name type="scientific">Mus musculus</name>
    <name type="common">Mouse</name>
    <dbReference type="NCBI Taxonomy" id="10090"/>
    <lineage>
        <taxon>Eukaryota</taxon>
        <taxon>Metazoa</taxon>
        <taxon>Chordata</taxon>
        <taxon>Craniata</taxon>
        <taxon>Vertebrata</taxon>
        <taxon>Euteleostomi</taxon>
        <taxon>Mammalia</taxon>
        <taxon>Eutheria</taxon>
        <taxon>Euarchontoglires</taxon>
        <taxon>Glires</taxon>
        <taxon>Rodentia</taxon>
        <taxon>Myomorpha</taxon>
        <taxon>Muroidea</taxon>
        <taxon>Muridae</taxon>
        <taxon>Murinae</taxon>
        <taxon>Mus</taxon>
        <taxon>Mus</taxon>
    </lineage>
</organism>
<reference key="1">
    <citation type="journal article" date="1998" name="J. Biol. Chem.">
        <title>Identification and expression in mouse of two heparan sulfate glucosaminyl N-deacetylase/N-sulfotransferase genes.</title>
        <authorList>
            <person name="Kusche-Gullberg M."/>
            <person name="Eriksson I."/>
            <person name="Pikas D.S."/>
            <person name="Kjellen L."/>
        </authorList>
    </citation>
    <scope>NUCLEOTIDE SEQUENCE [MRNA] (ISOFORM 1)</scope>
    <source>
        <strain>Leaden X A1</strain>
        <tissue>Liver</tissue>
    </source>
</reference>
<reference key="2">
    <citation type="journal article" date="2001" name="J. Biol. Chem.">
        <title>Multiple isozymes of heparan sulfate/heparin GlcNAc N-deacetylase/GlcN N-sulfotransferase. Structure and activity of the fourth member, NDST4.</title>
        <authorList>
            <person name="Aikawa J."/>
            <person name="Grobe K."/>
            <person name="Tsujimoto M."/>
            <person name="Esko J.D."/>
        </authorList>
    </citation>
    <scope>NUCLEOTIDE SEQUENCE [MRNA] (ISOFORM 1)</scope>
    <scope>FUNCTION</scope>
    <scope>CATALYTIC ACTIVITY</scope>
    <scope>TISSUE SPECIFICITY</scope>
    <source>
        <strain>BALB/cJ</strain>
        <tissue>Lung</tissue>
    </source>
</reference>
<reference key="3">
    <citation type="journal article" date="2005" name="Science">
        <title>The transcriptional landscape of the mammalian genome.</title>
        <authorList>
            <person name="Carninci P."/>
            <person name="Kasukawa T."/>
            <person name="Katayama S."/>
            <person name="Gough J."/>
            <person name="Frith M.C."/>
            <person name="Maeda N."/>
            <person name="Oyama R."/>
            <person name="Ravasi T."/>
            <person name="Lenhard B."/>
            <person name="Wells C."/>
            <person name="Kodzius R."/>
            <person name="Shimokawa K."/>
            <person name="Bajic V.B."/>
            <person name="Brenner S.E."/>
            <person name="Batalov S."/>
            <person name="Forrest A.R."/>
            <person name="Zavolan M."/>
            <person name="Davis M.J."/>
            <person name="Wilming L.G."/>
            <person name="Aidinis V."/>
            <person name="Allen J.E."/>
            <person name="Ambesi-Impiombato A."/>
            <person name="Apweiler R."/>
            <person name="Aturaliya R.N."/>
            <person name="Bailey T.L."/>
            <person name="Bansal M."/>
            <person name="Baxter L."/>
            <person name="Beisel K.W."/>
            <person name="Bersano T."/>
            <person name="Bono H."/>
            <person name="Chalk A.M."/>
            <person name="Chiu K.P."/>
            <person name="Choudhary V."/>
            <person name="Christoffels A."/>
            <person name="Clutterbuck D.R."/>
            <person name="Crowe M.L."/>
            <person name="Dalla E."/>
            <person name="Dalrymple B.P."/>
            <person name="de Bono B."/>
            <person name="Della Gatta G."/>
            <person name="di Bernardo D."/>
            <person name="Down T."/>
            <person name="Engstrom P."/>
            <person name="Fagiolini M."/>
            <person name="Faulkner G."/>
            <person name="Fletcher C.F."/>
            <person name="Fukushima T."/>
            <person name="Furuno M."/>
            <person name="Futaki S."/>
            <person name="Gariboldi M."/>
            <person name="Georgii-Hemming P."/>
            <person name="Gingeras T.R."/>
            <person name="Gojobori T."/>
            <person name="Green R.E."/>
            <person name="Gustincich S."/>
            <person name="Harbers M."/>
            <person name="Hayashi Y."/>
            <person name="Hensch T.K."/>
            <person name="Hirokawa N."/>
            <person name="Hill D."/>
            <person name="Huminiecki L."/>
            <person name="Iacono M."/>
            <person name="Ikeo K."/>
            <person name="Iwama A."/>
            <person name="Ishikawa T."/>
            <person name="Jakt M."/>
            <person name="Kanapin A."/>
            <person name="Katoh M."/>
            <person name="Kawasawa Y."/>
            <person name="Kelso J."/>
            <person name="Kitamura H."/>
            <person name="Kitano H."/>
            <person name="Kollias G."/>
            <person name="Krishnan S.P."/>
            <person name="Kruger A."/>
            <person name="Kummerfeld S.K."/>
            <person name="Kurochkin I.V."/>
            <person name="Lareau L.F."/>
            <person name="Lazarevic D."/>
            <person name="Lipovich L."/>
            <person name="Liu J."/>
            <person name="Liuni S."/>
            <person name="McWilliam S."/>
            <person name="Madan Babu M."/>
            <person name="Madera M."/>
            <person name="Marchionni L."/>
            <person name="Matsuda H."/>
            <person name="Matsuzawa S."/>
            <person name="Miki H."/>
            <person name="Mignone F."/>
            <person name="Miyake S."/>
            <person name="Morris K."/>
            <person name="Mottagui-Tabar S."/>
            <person name="Mulder N."/>
            <person name="Nakano N."/>
            <person name="Nakauchi H."/>
            <person name="Ng P."/>
            <person name="Nilsson R."/>
            <person name="Nishiguchi S."/>
            <person name="Nishikawa S."/>
            <person name="Nori F."/>
            <person name="Ohara O."/>
            <person name="Okazaki Y."/>
            <person name="Orlando V."/>
            <person name="Pang K.C."/>
            <person name="Pavan W.J."/>
            <person name="Pavesi G."/>
            <person name="Pesole G."/>
            <person name="Petrovsky N."/>
            <person name="Piazza S."/>
            <person name="Reed J."/>
            <person name="Reid J.F."/>
            <person name="Ring B.Z."/>
            <person name="Ringwald M."/>
            <person name="Rost B."/>
            <person name="Ruan Y."/>
            <person name="Salzberg S.L."/>
            <person name="Sandelin A."/>
            <person name="Schneider C."/>
            <person name="Schoenbach C."/>
            <person name="Sekiguchi K."/>
            <person name="Semple C.A."/>
            <person name="Seno S."/>
            <person name="Sessa L."/>
            <person name="Sheng Y."/>
            <person name="Shibata Y."/>
            <person name="Shimada H."/>
            <person name="Shimada K."/>
            <person name="Silva D."/>
            <person name="Sinclair B."/>
            <person name="Sperling S."/>
            <person name="Stupka E."/>
            <person name="Sugiura K."/>
            <person name="Sultana R."/>
            <person name="Takenaka Y."/>
            <person name="Taki K."/>
            <person name="Tammoja K."/>
            <person name="Tan S.L."/>
            <person name="Tang S."/>
            <person name="Taylor M.S."/>
            <person name="Tegner J."/>
            <person name="Teichmann S.A."/>
            <person name="Ueda H.R."/>
            <person name="van Nimwegen E."/>
            <person name="Verardo R."/>
            <person name="Wei C.L."/>
            <person name="Yagi K."/>
            <person name="Yamanishi H."/>
            <person name="Zabarovsky E."/>
            <person name="Zhu S."/>
            <person name="Zimmer A."/>
            <person name="Hide W."/>
            <person name="Bult C."/>
            <person name="Grimmond S.M."/>
            <person name="Teasdale R.D."/>
            <person name="Liu E.T."/>
            <person name="Brusic V."/>
            <person name="Quackenbush J."/>
            <person name="Wahlestedt C."/>
            <person name="Mattick J.S."/>
            <person name="Hume D.A."/>
            <person name="Kai C."/>
            <person name="Sasaki D."/>
            <person name="Tomaru Y."/>
            <person name="Fukuda S."/>
            <person name="Kanamori-Katayama M."/>
            <person name="Suzuki M."/>
            <person name="Aoki J."/>
            <person name="Arakawa T."/>
            <person name="Iida J."/>
            <person name="Imamura K."/>
            <person name="Itoh M."/>
            <person name="Kato T."/>
            <person name="Kawaji H."/>
            <person name="Kawagashira N."/>
            <person name="Kawashima T."/>
            <person name="Kojima M."/>
            <person name="Kondo S."/>
            <person name="Konno H."/>
            <person name="Nakano K."/>
            <person name="Ninomiya N."/>
            <person name="Nishio T."/>
            <person name="Okada M."/>
            <person name="Plessy C."/>
            <person name="Shibata K."/>
            <person name="Shiraki T."/>
            <person name="Suzuki S."/>
            <person name="Tagami M."/>
            <person name="Waki K."/>
            <person name="Watahiki A."/>
            <person name="Okamura-Oho Y."/>
            <person name="Suzuki H."/>
            <person name="Kawai J."/>
            <person name="Hayashizaki Y."/>
        </authorList>
    </citation>
    <scope>NUCLEOTIDE SEQUENCE [LARGE SCALE MRNA] (ISOFORMS 1; 2 AND 3)</scope>
    <source>
        <strain>C57BL/6J</strain>
        <strain>NOD</strain>
        <tissue>Urinary bladder</tissue>
    </source>
</reference>
<reference key="4">
    <citation type="journal article" date="2004" name="Genome Res.">
        <title>The status, quality, and expansion of the NIH full-length cDNA project: the Mammalian Gene Collection (MGC).</title>
        <authorList>
            <consortium name="The MGC Project Team"/>
        </authorList>
    </citation>
    <scope>NUCLEOTIDE SEQUENCE [LARGE SCALE MRNA]</scope>
    <source>
        <strain>C57BL/6J</strain>
        <tissue>Brain</tissue>
    </source>
</reference>
<reference key="5">
    <citation type="journal article" date="2000" name="Biochemistry">
        <title>Overexpression of different isoforms of glucosaminyl N-deacetylase/N-sulfotransferase results in distinct heparan sulfate N-sulfation patterns.</title>
        <authorList>
            <person name="Pikas D.S."/>
            <person name="Eriksson I."/>
            <person name="Kjellen L."/>
        </authorList>
    </citation>
    <scope>FUNCTION</scope>
    <scope>CATALYTIC ACTIVITY</scope>
    <scope>PATHWAY</scope>
</reference>
<reference key="6">
    <citation type="journal article" date="2000" name="FEBS Lett.">
        <title>Targeted disruption of NDST-1 gene leads to pulmonary hypoplasia and neonatal respiratory distress in mice.</title>
        <authorList>
            <person name="Fan G."/>
            <person name="Xiao L."/>
            <person name="Cheng L."/>
            <person name="Wang X."/>
            <person name="Sun B."/>
            <person name="Hu G."/>
        </authorList>
    </citation>
    <scope>FUNCTION</scope>
    <scope>DISRUPTION PHENOTYPE</scope>
</reference>
<reference key="7">
    <citation type="journal article" date="2000" name="J. Biol. Chem.">
        <title>Defective heparan sulfate biosynthesis and neonatal lethality in mice lacking N-deacetylase/N-sulfotransferase-1.</title>
        <authorList>
            <person name="Ringvall M."/>
            <person name="Ledin J."/>
            <person name="Holmborn K."/>
            <person name="van Kuppevelt T."/>
            <person name="Ellin F."/>
            <person name="Eriksson I."/>
            <person name="Olofsson A.M."/>
            <person name="Kjellen L."/>
            <person name="Forsberg E."/>
        </authorList>
    </citation>
    <scope>DISRUPTION PHENOTYPE</scope>
</reference>
<reference key="8">
    <citation type="journal article" date="2003" name="Biochemistry">
        <title>Distinct effects on heparan sulfate structure by different active site mutations in NDST-1.</title>
        <authorList>
            <person name="Bengtsson J."/>
            <person name="Eriksson I."/>
            <person name="Kjellen L."/>
        </authorList>
    </citation>
    <scope>FUNCTION</scope>
    <scope>CATALYTIC ACTIVITY</scope>
    <scope>PATHWAY</scope>
    <scope>MUTAGENESIS OF CYS-486 AND LYS-614</scope>
</reference>
<reference key="9">
    <citation type="journal article" date="2003" name="Glycobiology">
        <title>Antibody-based assay for N-deacetylase activity of heparan sulfate/heparin N-deacetylase/N-sulfotransferase (NDST): novel characteristics of NDST-1 and -2.</title>
        <authorList>
            <person name="van den Born J."/>
            <person name="Pikas D.S."/>
            <person name="Pisa B.J."/>
            <person name="Eriksson I."/>
            <person name="Kjellen L."/>
            <person name="Berden J.H.M."/>
        </authorList>
    </citation>
    <scope>FUNCTION</scope>
    <scope>CATALYTIC ACTIVITY</scope>
    <scope>PATHWAY</scope>
    <scope>BIOPHYSICOCHEMICAL PROPERTIES</scope>
    <scope>ACTIVITY REGULATION</scope>
</reference>
<reference key="10">
    <citation type="journal article" date="2003" name="J. Cell Sci.">
        <title>Disturbed Ca2+ kinetics in N-deacetylase/N-sulfotransferase-1 defective myotubes.</title>
        <authorList>
            <person name="Jenniskens G.J."/>
            <person name="Ringvall M."/>
            <person name="Koopman W.J."/>
            <person name="Ledin J."/>
            <person name="Kjellen L."/>
            <person name="Willems P.H.G.M."/>
            <person name="Forsberg E."/>
            <person name="Veerkamp J.H."/>
            <person name="van Kuppevelt T.H."/>
        </authorList>
    </citation>
    <scope>FUNCTION</scope>
    <scope>CATALYTIC ACTIVITY</scope>
    <scope>PATHWAY</scope>
    <scope>DISRUPTION PHENOTYPE</scope>
</reference>
<reference key="11">
    <citation type="journal article" date="2005" name="Development">
        <title>Cerebral hypoplasia and craniofacial defects in mice lacking heparan sulfate Ndst1 gene function.</title>
        <authorList>
            <person name="Grobe K."/>
            <person name="Inatani M."/>
            <person name="Pallerla S.R."/>
            <person name="Castagnola J."/>
            <person name="Yamaguchi Y."/>
            <person name="Esko J.D."/>
        </authorList>
    </citation>
    <scope>FUNCTION</scope>
    <scope>DISRUPTION PHENOTYPE</scope>
</reference>
<reference key="12">
    <citation type="journal article" date="2005" name="Nat. Immunol.">
        <title>Endothelial heparan sulfate deficiency impairs L-selectin- and chemokine-mediated neutrophil trafficking during inflammatory responses.</title>
        <authorList>
            <person name="Wang L."/>
            <person name="Fuster M."/>
            <person name="Sriramarao P."/>
            <person name="Esko J.D."/>
        </authorList>
    </citation>
    <scope>FUNCTION</scope>
    <scope>CATALYTIC ACTIVITY</scope>
    <scope>PATHWAY</scope>
    <scope>DISRUPTION PHENOTYPE</scope>
</reference>
<reference key="13">
    <citation type="journal article" date="2008" name="Proc. Natl. Acad. Sci. U.S.A.">
        <title>Heparan sulfate biosynthesis enzymes EXT1 and EXT2 affect NDST1 expression and heparan sulfate sulfation.</title>
        <authorList>
            <person name="Presto J."/>
            <person name="Thuveson M."/>
            <person name="Carlsson P."/>
            <person name="Busse M."/>
            <person name="Wilen M."/>
            <person name="Eriksson I."/>
            <person name="Kusche-Gullberg M."/>
            <person name="Kjellen L."/>
        </authorList>
    </citation>
    <scope>FUNCTION</scope>
    <scope>CATALYTIC ACTIVITY</scope>
    <scope>INTERACTION WITH EXT2</scope>
</reference>
<reference key="14">
    <citation type="journal article" date="2010" name="Cell">
        <title>A tissue-specific atlas of mouse protein phosphorylation and expression.</title>
        <authorList>
            <person name="Huttlin E.L."/>
            <person name="Jedrychowski M.P."/>
            <person name="Elias J.E."/>
            <person name="Goswami T."/>
            <person name="Rad R."/>
            <person name="Beausoleil S.A."/>
            <person name="Villen J."/>
            <person name="Haas W."/>
            <person name="Sowa M.E."/>
            <person name="Gygi S.P."/>
        </authorList>
    </citation>
    <scope>IDENTIFICATION BY MASS SPECTROMETRY [LARGE SCALE ANALYSIS]</scope>
    <source>
        <tissue>Liver</tissue>
        <tissue>Lung</tissue>
    </source>
</reference>
<name>NDST1_MOUSE</name>
<gene>
    <name evidence="19" type="primary">Ndst1</name>
</gene>
<keyword id="KW-0025">Alternative splicing</keyword>
<keyword id="KW-1015">Disulfide bond</keyword>
<keyword id="KW-0325">Glycoprotein</keyword>
<keyword id="KW-0333">Golgi apparatus</keyword>
<keyword id="KW-0378">Hydrolase</keyword>
<keyword id="KW-0395">Inflammatory response</keyword>
<keyword id="KW-0472">Membrane</keyword>
<keyword id="KW-0511">Multifunctional enzyme</keyword>
<keyword id="KW-1185">Reference proteome</keyword>
<keyword id="KW-0735">Signal-anchor</keyword>
<keyword id="KW-0808">Transferase</keyword>
<keyword id="KW-0812">Transmembrane</keyword>
<keyword id="KW-1133">Transmembrane helix</keyword>
<sequence length="882" mass="100726">MPALACLRRLCRHLSPQAVLFLLFVFCLFSVFVSAYYLYGWNRGLEPSADASESDCGDPPPVAPSRLLPIKPVQAVAPSRTDPLVLVFVESLYSQLGQEVVAILESSRFKYRTEIAPGKGDMPTLTDKGRGRFALIIYENILKYVNLDAWNRELLDKYCVAYGVGIIGFFKANENSLLSAQLKGFPLFLHSNLGLKDCSINPKSPLLYVTRPSEVEKGVLPGEDWTVFQSNHSTYEPVLLAKTRSSESIPHLGADAGLHAALHATVVQDLGLHDGIQRVLFGNNLNFWLHKLVFVDAVAFLTGKRLSLPLDRYILVDIDDIFVGKEGTRMKVEDVKALFDTQNELRTHIPNFTFNLGYSGKFFHTGTDAEDAGDDLLLSYVKEFWWFPHMWSHMQPHLFHNQSVLAEQMALNKKFAVEHGIPTDMGYAVAPHHSGVYPVHVQLYEAWKQVWGIRVTSTEEYPHLKPARYRRGFIHNGIMVLPRQTCGLFTHTIFYNEYPGGSSELDKIINGGELFLTVLLNPISIFMTHLSNYGNDRLGLYTFKHLVRFLHSWTNLRLQTLPPVQLAQKYFQIFSEEKDPLWQDPCEDKRHKDIWSKEKTCDRFPKLLIIGPQKTGTTALYLFLGMHPDLSSNYPSSETFEEIQFFNGHNYHKGIDWYMEFFPIPSNTTSDFYFEKSANYFDSEVAPRRAAALLPKAKILSILINPADRAYSWYQHQRAHDDPVALKYTFHEVITAGPDASSKLRALQNRCLVPGWYATHIERWLSAFHANQILVLDGKLLRTEPAKVMDTVQKFLGVTSTVDYHKTLAFDPKKGFWCQLLEGGKTKCLGKSKGRKYPEMDLDSRAFLKDYFRDHNIELSKLLYKMGQTLPTWLREDLQNTR</sequence>
<dbReference type="EC" id="3.5.1.-" evidence="5 8 9"/>
<dbReference type="EC" id="2.8.2.8" evidence="5 7 8 9 11 12 13"/>
<dbReference type="EMBL" id="AF049894">
    <property type="protein sequence ID" value="AAC17228.1"/>
    <property type="molecule type" value="mRNA"/>
</dbReference>
<dbReference type="EMBL" id="AF074926">
    <property type="protein sequence ID" value="AAD15980.1"/>
    <property type="molecule type" value="mRNA"/>
</dbReference>
<dbReference type="EMBL" id="AK035642">
    <property type="protein sequence ID" value="BAC29136.1"/>
    <property type="molecule type" value="mRNA"/>
</dbReference>
<dbReference type="EMBL" id="AK147282">
    <property type="protein sequence ID" value="BAE27818.1"/>
    <property type="molecule type" value="mRNA"/>
</dbReference>
<dbReference type="EMBL" id="AK170041">
    <property type="protein sequence ID" value="BAE41527.1"/>
    <property type="status" value="ALT_FRAME"/>
    <property type="molecule type" value="mRNA"/>
</dbReference>
<dbReference type="EMBL" id="AK171013">
    <property type="protein sequence ID" value="BAE42184.1"/>
    <property type="molecule type" value="mRNA"/>
</dbReference>
<dbReference type="EMBL" id="BC066098">
    <property type="protein sequence ID" value="AAH66098.1"/>
    <property type="molecule type" value="mRNA"/>
</dbReference>
<dbReference type="EMBL" id="BC079561">
    <property type="protein sequence ID" value="AAH79561.1"/>
    <property type="molecule type" value="mRNA"/>
</dbReference>
<dbReference type="CCDS" id="CCDS37834.1">
    <molecule id="Q3UHN9-1"/>
</dbReference>
<dbReference type="RefSeq" id="NP_001335029.1">
    <molecule id="Q3UHN9-1"/>
    <property type="nucleotide sequence ID" value="NM_001348100.1"/>
</dbReference>
<dbReference type="RefSeq" id="NP_001335030.1">
    <molecule id="Q3UHN9-1"/>
    <property type="nucleotide sequence ID" value="NM_001348101.1"/>
</dbReference>
<dbReference type="RefSeq" id="NP_001335031.1">
    <molecule id="Q3UHN9-1"/>
    <property type="nucleotide sequence ID" value="NM_001348102.1"/>
</dbReference>
<dbReference type="RefSeq" id="NP_001335032.1">
    <molecule id="Q3UHN9-1"/>
    <property type="nucleotide sequence ID" value="NM_001348103.1"/>
</dbReference>
<dbReference type="RefSeq" id="NP_001335075.1">
    <molecule id="Q3UHN9-2"/>
    <property type="nucleotide sequence ID" value="NM_001348146.1"/>
</dbReference>
<dbReference type="RefSeq" id="NP_032332.2">
    <molecule id="Q3UHN9-1"/>
    <property type="nucleotide sequence ID" value="NM_008306.5"/>
</dbReference>
<dbReference type="RefSeq" id="XP_006525730.1">
    <property type="nucleotide sequence ID" value="XM_006525667.3"/>
</dbReference>
<dbReference type="RefSeq" id="XP_006525731.1">
    <molecule id="Q3UHN9-1"/>
    <property type="nucleotide sequence ID" value="XM_006525668.4"/>
</dbReference>
<dbReference type="RefSeq" id="XP_006525732.1">
    <property type="nucleotide sequence ID" value="XM_006525669.3"/>
</dbReference>
<dbReference type="RefSeq" id="XP_006525733.1">
    <property type="nucleotide sequence ID" value="XM_006525670.3"/>
</dbReference>
<dbReference type="RefSeq" id="XP_006525734.1">
    <property type="nucleotide sequence ID" value="XM_006525671.1"/>
</dbReference>
<dbReference type="RefSeq" id="XP_011245146.1">
    <property type="nucleotide sequence ID" value="XM_011246844.2"/>
</dbReference>
<dbReference type="RefSeq" id="XP_030106200.1">
    <molecule id="Q3UHN9-1"/>
    <property type="nucleotide sequence ID" value="XM_030250340.2"/>
</dbReference>
<dbReference type="RefSeq" id="XP_030106201.1">
    <molecule id="Q3UHN9-1"/>
    <property type="nucleotide sequence ID" value="XM_030250341.1"/>
</dbReference>
<dbReference type="RefSeq" id="XP_030106202.1">
    <molecule id="Q3UHN9-1"/>
    <property type="nucleotide sequence ID" value="XM_030250342.1"/>
</dbReference>
<dbReference type="RefSeq" id="XP_036016884.1">
    <molecule id="Q3UHN9-1"/>
    <property type="nucleotide sequence ID" value="XM_036160991.1"/>
</dbReference>
<dbReference type="RefSeq" id="XP_036016885.1">
    <molecule id="Q3UHN9-1"/>
    <property type="nucleotide sequence ID" value="XM_036160992.1"/>
</dbReference>
<dbReference type="SMR" id="Q3UHN9"/>
<dbReference type="BioGRID" id="200462">
    <property type="interactions" value="1"/>
</dbReference>
<dbReference type="DIP" id="DIP-29859N"/>
<dbReference type="FunCoup" id="Q3UHN9">
    <property type="interactions" value="852"/>
</dbReference>
<dbReference type="IntAct" id="Q3UHN9">
    <property type="interactions" value="1"/>
</dbReference>
<dbReference type="STRING" id="10090.ENSMUSP00000158312"/>
<dbReference type="GlyCosmos" id="Q3UHN9">
    <property type="glycosylation" value="4 sites, No reported glycans"/>
</dbReference>
<dbReference type="GlyGen" id="Q3UHN9">
    <property type="glycosylation" value="4 sites, 1 N-linked glycan (1 site)"/>
</dbReference>
<dbReference type="iPTMnet" id="Q3UHN9"/>
<dbReference type="PhosphoSitePlus" id="Q3UHN9"/>
<dbReference type="SwissPalm" id="Q3UHN9"/>
<dbReference type="PaxDb" id="10090-ENSMUSP00000126623"/>
<dbReference type="PeptideAtlas" id="Q3UHN9"/>
<dbReference type="ProteomicsDB" id="252936">
    <molecule id="Q3UHN9-1"/>
</dbReference>
<dbReference type="ProteomicsDB" id="252937">
    <molecule id="Q3UHN9-2"/>
</dbReference>
<dbReference type="ProteomicsDB" id="252938">
    <molecule id="Q3UHN9-3"/>
</dbReference>
<dbReference type="Pumba" id="Q3UHN9"/>
<dbReference type="Antibodypedia" id="28038">
    <property type="antibodies" value="197 antibodies from 24 providers"/>
</dbReference>
<dbReference type="DNASU" id="15531"/>
<dbReference type="Ensembl" id="ENSMUST00000169273.2">
    <molecule id="Q3UHN9-1"/>
    <property type="protein sequence ID" value="ENSMUSP00000126623.2"/>
    <property type="gene ID" value="ENSMUSG00000054008.10"/>
</dbReference>
<dbReference type="Ensembl" id="ENSMUST00000237783.2">
    <molecule id="Q3UHN9-1"/>
    <property type="protein sequence ID" value="ENSMUSP00000158312.2"/>
    <property type="gene ID" value="ENSMUSG00000054008.10"/>
</dbReference>
<dbReference type="GeneID" id="15531"/>
<dbReference type="KEGG" id="mmu:15531"/>
<dbReference type="UCSC" id="uc008fat.1">
    <molecule id="Q3UHN9-1"/>
    <property type="organism name" value="mouse"/>
</dbReference>
<dbReference type="UCSC" id="uc008fav.1">
    <molecule id="Q3UHN9-2"/>
    <property type="organism name" value="mouse"/>
</dbReference>
<dbReference type="UCSC" id="uc008faw.1">
    <molecule id="Q3UHN9-3"/>
    <property type="organism name" value="mouse"/>
</dbReference>
<dbReference type="AGR" id="MGI:104719"/>
<dbReference type="CTD" id="3340"/>
<dbReference type="MGI" id="MGI:104719">
    <property type="gene designation" value="Ndst1"/>
</dbReference>
<dbReference type="VEuPathDB" id="HostDB:ENSMUSG00000054008"/>
<dbReference type="eggNOG" id="KOG3703">
    <property type="taxonomic scope" value="Eukaryota"/>
</dbReference>
<dbReference type="GeneTree" id="ENSGT00940000157857"/>
<dbReference type="HOGENOM" id="CLU_011357_2_0_1"/>
<dbReference type="InParanoid" id="Q3UHN9"/>
<dbReference type="OMA" id="VGPDCDE"/>
<dbReference type="OrthoDB" id="8958249at2759"/>
<dbReference type="PhylomeDB" id="Q3UHN9"/>
<dbReference type="TreeFam" id="TF313193"/>
<dbReference type="BRENDA" id="2.8.2.8">
    <property type="organism ID" value="3474"/>
</dbReference>
<dbReference type="Reactome" id="R-MMU-2022928">
    <property type="pathway name" value="HS-GAG biosynthesis"/>
</dbReference>
<dbReference type="UniPathway" id="UPA00756"/>
<dbReference type="UniPathway" id="UPA00862"/>
<dbReference type="BioGRID-ORCS" id="15531">
    <property type="hits" value="2 hits in 77 CRISPR screens"/>
</dbReference>
<dbReference type="ChiTaRS" id="Ndst1">
    <property type="organism name" value="mouse"/>
</dbReference>
<dbReference type="PRO" id="PR:Q3UHN9"/>
<dbReference type="Proteomes" id="UP000000589">
    <property type="component" value="Chromosome 18"/>
</dbReference>
<dbReference type="RNAct" id="Q3UHN9">
    <property type="molecule type" value="protein"/>
</dbReference>
<dbReference type="Bgee" id="ENSMUSG00000054008">
    <property type="expression patterns" value="Expressed in right lung lobe and 268 other cell types or tissues"/>
</dbReference>
<dbReference type="ExpressionAtlas" id="Q3UHN9">
    <property type="expression patterns" value="baseline and differential"/>
</dbReference>
<dbReference type="GO" id="GO:0005794">
    <property type="term" value="C:Golgi apparatus"/>
    <property type="evidence" value="ECO:0000314"/>
    <property type="project" value="MGI"/>
</dbReference>
<dbReference type="GO" id="GO:0000139">
    <property type="term" value="C:Golgi membrane"/>
    <property type="evidence" value="ECO:0007669"/>
    <property type="project" value="UniProtKB-SubCell"/>
</dbReference>
<dbReference type="GO" id="GO:0032588">
    <property type="term" value="C:trans-Golgi network membrane"/>
    <property type="evidence" value="ECO:0000250"/>
    <property type="project" value="UniProtKB"/>
</dbReference>
<dbReference type="GO" id="GO:0019213">
    <property type="term" value="F:deacetylase activity"/>
    <property type="evidence" value="ECO:0000314"/>
    <property type="project" value="MGI"/>
</dbReference>
<dbReference type="GO" id="GO:0102140">
    <property type="term" value="F:heparan sulfate N-deacetylase activity"/>
    <property type="evidence" value="ECO:0000314"/>
    <property type="project" value="UniProtKB"/>
</dbReference>
<dbReference type="GO" id="GO:0015016">
    <property type="term" value="F:heparan sulfate N-sulfotransferase activity"/>
    <property type="evidence" value="ECO:0000314"/>
    <property type="project" value="UniProtKB"/>
</dbReference>
<dbReference type="GO" id="GO:0050119">
    <property type="term" value="F:N-acetylglucosamine deacetylase activity"/>
    <property type="evidence" value="ECO:0000314"/>
    <property type="project" value="MGI"/>
</dbReference>
<dbReference type="GO" id="GO:0008146">
    <property type="term" value="F:sulfotransferase activity"/>
    <property type="evidence" value="ECO:0000314"/>
    <property type="project" value="MGI"/>
</dbReference>
<dbReference type="GO" id="GO:0009887">
    <property type="term" value="P:animal organ morphogenesis"/>
    <property type="evidence" value="ECO:0000315"/>
    <property type="project" value="MGI"/>
</dbReference>
<dbReference type="GO" id="GO:0035904">
    <property type="term" value="P:aorta development"/>
    <property type="evidence" value="ECO:0000315"/>
    <property type="project" value="MGI"/>
</dbReference>
<dbReference type="GO" id="GO:0003279">
    <property type="term" value="P:cardiac septum development"/>
    <property type="evidence" value="ECO:0000315"/>
    <property type="project" value="MGI"/>
</dbReference>
<dbReference type="GO" id="GO:0008283">
    <property type="term" value="P:cell population proliferation"/>
    <property type="evidence" value="ECO:0000315"/>
    <property type="project" value="MGI"/>
</dbReference>
<dbReference type="GO" id="GO:0060976">
    <property type="term" value="P:coronary vasculature development"/>
    <property type="evidence" value="ECO:0000315"/>
    <property type="project" value="MGI"/>
</dbReference>
<dbReference type="GO" id="GO:0048702">
    <property type="term" value="P:embryonic neurocranium morphogenesis"/>
    <property type="evidence" value="ECO:0000315"/>
    <property type="project" value="MGI"/>
</dbReference>
<dbReference type="GO" id="GO:0048703">
    <property type="term" value="P:embryonic viscerocranium morphogenesis"/>
    <property type="evidence" value="ECO:0000315"/>
    <property type="project" value="MGI"/>
</dbReference>
<dbReference type="GO" id="GO:0008543">
    <property type="term" value="P:fibroblast growth factor receptor signaling pathway"/>
    <property type="evidence" value="ECO:0000315"/>
    <property type="project" value="MGI"/>
</dbReference>
<dbReference type="GO" id="GO:0030900">
    <property type="term" value="P:forebrain development"/>
    <property type="evidence" value="ECO:0000315"/>
    <property type="project" value="MGI"/>
</dbReference>
<dbReference type="GO" id="GO:0030203">
    <property type="term" value="P:glycosaminoglycan metabolic process"/>
    <property type="evidence" value="ECO:0000315"/>
    <property type="project" value="MGI"/>
</dbReference>
<dbReference type="GO" id="GO:0007507">
    <property type="term" value="P:heart development"/>
    <property type="evidence" value="ECO:0000315"/>
    <property type="project" value="MGI"/>
</dbReference>
<dbReference type="GO" id="GO:0015012">
    <property type="term" value="P:heparan sulfate proteoglycan biosynthetic process"/>
    <property type="evidence" value="ECO:0000314"/>
    <property type="project" value="UniProtKB"/>
</dbReference>
<dbReference type="GO" id="GO:0030210">
    <property type="term" value="P:heparin proteoglycan biosynthetic process"/>
    <property type="evidence" value="ECO:0007669"/>
    <property type="project" value="UniProtKB-UniPathway"/>
</dbReference>
<dbReference type="GO" id="GO:0006954">
    <property type="term" value="P:inflammatory response"/>
    <property type="evidence" value="ECO:0007669"/>
    <property type="project" value="UniProtKB-KW"/>
</dbReference>
<dbReference type="GO" id="GO:0030901">
    <property type="term" value="P:midbrain development"/>
    <property type="evidence" value="ECO:0000316"/>
    <property type="project" value="MGI"/>
</dbReference>
<dbReference type="GO" id="GO:0000271">
    <property type="term" value="P:polysaccharide biosynthetic process"/>
    <property type="evidence" value="ECO:0000315"/>
    <property type="project" value="MGI"/>
</dbReference>
<dbReference type="GO" id="GO:0043410">
    <property type="term" value="P:positive regulation of MAPK cascade"/>
    <property type="evidence" value="ECO:0000315"/>
    <property type="project" value="MGI"/>
</dbReference>
<dbReference type="GO" id="GO:0045880">
    <property type="term" value="P:positive regulation of smoothened signaling pathway"/>
    <property type="evidence" value="ECO:0000316"/>
    <property type="project" value="MGI"/>
</dbReference>
<dbReference type="GO" id="GO:0007585">
    <property type="term" value="P:respiratory gaseous exchange by respiratory system"/>
    <property type="evidence" value="ECO:0000315"/>
    <property type="project" value="MGI"/>
</dbReference>
<dbReference type="FunFam" id="3.40.50.300:FF:000176">
    <property type="entry name" value="bifunctional heparan sulfate N-deacetylase/N-sulfotransferase 1"/>
    <property type="match status" value="1"/>
</dbReference>
<dbReference type="Gene3D" id="3.40.50.300">
    <property type="entry name" value="P-loop containing nucleotide triphosphate hydrolases"/>
    <property type="match status" value="1"/>
</dbReference>
<dbReference type="InterPro" id="IPR021930">
    <property type="entry name" value="Heparan_SO4_deacetylase_dom"/>
</dbReference>
<dbReference type="InterPro" id="IPR056793">
    <property type="entry name" value="HSNSD_N"/>
</dbReference>
<dbReference type="InterPro" id="IPR037359">
    <property type="entry name" value="NST/OST"/>
</dbReference>
<dbReference type="InterPro" id="IPR027417">
    <property type="entry name" value="P-loop_NTPase"/>
</dbReference>
<dbReference type="InterPro" id="IPR000863">
    <property type="entry name" value="Sulfotransferase_dom"/>
</dbReference>
<dbReference type="PANTHER" id="PTHR10605:SF30">
    <property type="entry name" value="BIFUNCTIONAL HEPARAN SULFATE N-DEACETYLASE_N-SULFOTRANSFERASE 1"/>
    <property type="match status" value="1"/>
</dbReference>
<dbReference type="PANTHER" id="PTHR10605">
    <property type="entry name" value="HEPARAN SULFATE SULFOTRANSFERASE"/>
    <property type="match status" value="1"/>
</dbReference>
<dbReference type="Pfam" id="PF12062">
    <property type="entry name" value="HSNSD-CE"/>
    <property type="match status" value="1"/>
</dbReference>
<dbReference type="Pfam" id="PF25119">
    <property type="entry name" value="HSNSD_N"/>
    <property type="match status" value="1"/>
</dbReference>
<dbReference type="Pfam" id="PF00685">
    <property type="entry name" value="Sulfotransfer_1"/>
    <property type="match status" value="1"/>
</dbReference>
<dbReference type="SUPFAM" id="SSF52540">
    <property type="entry name" value="P-loop containing nucleoside triphosphate hydrolases"/>
    <property type="match status" value="1"/>
</dbReference>
<feature type="chain" id="PRO_0000225655" description="Bifunctional heparan sulfate N-deacetylase/N-sulfotransferase 1">
    <location>
        <begin position="1"/>
        <end position="882"/>
    </location>
</feature>
<feature type="topological domain" description="Cytoplasmic" evidence="3">
    <location>
        <begin position="1"/>
        <end position="17"/>
    </location>
</feature>
<feature type="transmembrane region" description="Helical; Signal-anchor for type II membrane protein" evidence="3">
    <location>
        <begin position="18"/>
        <end position="38"/>
    </location>
</feature>
<feature type="topological domain" description="Lumenal" evidence="3">
    <location>
        <begin position="39"/>
        <end position="882"/>
    </location>
</feature>
<feature type="region of interest" description="Sufficient for localization to Golgi membrane" evidence="1">
    <location>
        <begin position="1"/>
        <end position="169"/>
    </location>
</feature>
<feature type="region of interest" description="Heparan sulfate N-deacetylase 1">
    <location>
        <begin position="40"/>
        <end position="598"/>
    </location>
</feature>
<feature type="region of interest" description="Heparan sulfate N-sulfotransferase 1">
    <location>
        <begin position="599"/>
        <end position="882"/>
    </location>
</feature>
<feature type="active site" description="For sulfotransferase activity" evidence="1">
    <location>
        <position position="614"/>
    </location>
</feature>
<feature type="binding site" evidence="1">
    <location>
        <begin position="614"/>
        <end position="618"/>
    </location>
    <ligand>
        <name>adenosine 3',5'-bisphosphate</name>
        <dbReference type="ChEBI" id="CHEBI:58343"/>
    </ligand>
</feature>
<feature type="binding site" evidence="1">
    <location>
        <position position="712"/>
    </location>
    <ligand>
        <name>adenosine 3',5'-bisphosphate</name>
        <dbReference type="ChEBI" id="CHEBI:58343"/>
    </ligand>
</feature>
<feature type="binding site" evidence="1">
    <location>
        <position position="817"/>
    </location>
    <ligand>
        <name>adenosine 3',5'-bisphosphate</name>
        <dbReference type="ChEBI" id="CHEBI:58343"/>
    </ligand>
</feature>
<feature type="binding site" evidence="1">
    <location>
        <begin position="833"/>
        <end position="837"/>
    </location>
    <ligand>
        <name>adenosine 3',5'-bisphosphate</name>
        <dbReference type="ChEBI" id="CHEBI:58343"/>
    </ligand>
</feature>
<feature type="glycosylation site" description="N-linked (GlcNAc...) asparagine" evidence="3">
    <location>
        <position position="231"/>
    </location>
</feature>
<feature type="glycosylation site" description="N-linked (GlcNAc...) asparagine" evidence="3">
    <location>
        <position position="351"/>
    </location>
</feature>
<feature type="glycosylation site" description="N-linked (GlcNAc...) asparagine" evidence="3">
    <location>
        <position position="401"/>
    </location>
</feature>
<feature type="glycosylation site" description="N-linked (GlcNAc...) asparagine" evidence="3">
    <location>
        <position position="667"/>
    </location>
</feature>
<feature type="disulfide bond" evidence="1">
    <location>
        <begin position="818"/>
        <end position="828"/>
    </location>
</feature>
<feature type="splice variant" id="VSP_017399" description="In isoform 3." evidence="15">
    <original>KYVNLDAWNRELLDKYCVAYGVGIIGFFKANENSLLSAQLKGF</original>
    <variation>SISCHSSSVLQTVKGKSAAGPFAQPGRKTGHVPEGFEPGPARV</variation>
    <location>
        <begin position="143"/>
        <end position="185"/>
    </location>
</feature>
<feature type="splice variant" id="VSP_017400" description="In isoform 3." evidence="15">
    <location>
        <begin position="186"/>
        <end position="882"/>
    </location>
</feature>
<feature type="splice variant" id="VSP_017401" description="In isoform 2." evidence="15">
    <original>VLPRQTCGLFTHTIFY</original>
    <variation>RLGDTEVKNPDKSLTS</variation>
    <location>
        <begin position="480"/>
        <end position="495"/>
    </location>
</feature>
<feature type="splice variant" id="VSP_017402" description="In isoform 2." evidence="15">
    <location>
        <begin position="496"/>
        <end position="882"/>
    </location>
</feature>
<feature type="mutagenesis site" description="Loss of deacetylase activity. No effect on sulfotransferase activity." evidence="8">
    <original>C</original>
    <variation>W</variation>
    <location>
        <position position="486"/>
    </location>
</feature>
<feature type="mutagenesis site" description="No effect on deacetylase activity. Loss of sulfotransferase activity." evidence="8">
    <original>K</original>
    <variation>A</variation>
    <location>
        <position position="614"/>
    </location>
</feature>
<feature type="sequence conflict" description="In Ref. 3; BAE27818." evidence="16" ref="3">
    <original>F</original>
    <variation>S</variation>
    <location>
        <position position="109"/>
    </location>
</feature>
<feature type="sequence conflict" description="In Ref. 1; AAC17228." evidence="16" ref="1">
    <original>M</original>
    <variation>V</variation>
    <location>
        <position position="789"/>
    </location>
</feature>
<evidence type="ECO:0000250" key="1">
    <source>
        <dbReference type="UniProtKB" id="P52848"/>
    </source>
</evidence>
<evidence type="ECO:0000250" key="2">
    <source>
        <dbReference type="UniProtKB" id="Q02353"/>
    </source>
</evidence>
<evidence type="ECO:0000255" key="3"/>
<evidence type="ECO:0000269" key="4">
    <source>
    </source>
</evidence>
<evidence type="ECO:0000269" key="5">
    <source>
    </source>
</evidence>
<evidence type="ECO:0000269" key="6">
    <source>
    </source>
</evidence>
<evidence type="ECO:0000269" key="7">
    <source>
    </source>
</evidence>
<evidence type="ECO:0000269" key="8">
    <source>
    </source>
</evidence>
<evidence type="ECO:0000269" key="9">
    <source>
    </source>
</evidence>
<evidence type="ECO:0000269" key="10">
    <source>
    </source>
</evidence>
<evidence type="ECO:0000269" key="11">
    <source>
    </source>
</evidence>
<evidence type="ECO:0000269" key="12">
    <source>
    </source>
</evidence>
<evidence type="ECO:0000269" key="13">
    <source>
    </source>
</evidence>
<evidence type="ECO:0000303" key="14">
    <source>
    </source>
</evidence>
<evidence type="ECO:0000303" key="15">
    <source>
    </source>
</evidence>
<evidence type="ECO:0000305" key="16"/>
<evidence type="ECO:0000305" key="17">
    <source>
    </source>
</evidence>
<evidence type="ECO:0000305" key="18">
    <source>
    </source>
</evidence>
<evidence type="ECO:0000312" key="19">
    <source>
        <dbReference type="MGI" id="MGI:104719"/>
    </source>
</evidence>
<protein>
    <recommendedName>
        <fullName evidence="17">Bifunctional heparan sulfate N-deacetylase/N-sulfotransferase 1</fullName>
    </recommendedName>
    <alternativeName>
        <fullName>Glucosaminyl N-deacetylase/N-sulfotransferase 1</fullName>
        <shortName evidence="14">NDST-1</shortName>
    </alternativeName>
    <alternativeName>
        <fullName>N-heparan sulfate sulfotransferase 1</fullName>
        <shortName>N-HSST 1</shortName>
    </alternativeName>
    <alternativeName>
        <fullName>[Heparan sulfate]-glucosamine N-sulfotransferase 1</fullName>
        <shortName>HSNST 1</shortName>
    </alternativeName>
    <domain>
        <recommendedName>
            <fullName>Heparan sulfate N-deacetylase 1</fullName>
            <ecNumber evidence="5 8 9">3.5.1.-</ecNumber>
        </recommendedName>
    </domain>
    <domain>
        <recommendedName>
            <fullName>Heparan sulfate N-sulfotransferase 1</fullName>
            <ecNumber evidence="5 7 8 9 11 12 13">2.8.2.8</ecNumber>
        </recommendedName>
    </domain>
</protein>